<feature type="chain" id="PRO_0000292366" description="Malate dehydrogenase">
    <location>
        <begin position="1"/>
        <end position="312"/>
    </location>
</feature>
<feature type="active site" description="Proton acceptor" evidence="1">
    <location>
        <position position="177"/>
    </location>
</feature>
<feature type="binding site" evidence="1">
    <location>
        <begin position="7"/>
        <end position="13"/>
    </location>
    <ligand>
        <name>NAD(+)</name>
        <dbReference type="ChEBI" id="CHEBI:57540"/>
    </ligand>
</feature>
<feature type="binding site" evidence="1">
    <location>
        <position position="34"/>
    </location>
    <ligand>
        <name>NAD(+)</name>
        <dbReference type="ChEBI" id="CHEBI:57540"/>
    </ligand>
</feature>
<feature type="binding site" evidence="1">
    <location>
        <position position="81"/>
    </location>
    <ligand>
        <name>substrate</name>
    </ligand>
</feature>
<feature type="binding site" evidence="1">
    <location>
        <position position="87"/>
    </location>
    <ligand>
        <name>substrate</name>
    </ligand>
</feature>
<feature type="binding site" evidence="1">
    <location>
        <position position="94"/>
    </location>
    <ligand>
        <name>NAD(+)</name>
        <dbReference type="ChEBI" id="CHEBI:57540"/>
    </ligand>
</feature>
<feature type="binding site" evidence="1">
    <location>
        <begin position="117"/>
        <end position="119"/>
    </location>
    <ligand>
        <name>NAD(+)</name>
        <dbReference type="ChEBI" id="CHEBI:57540"/>
    </ligand>
</feature>
<feature type="binding site" evidence="1">
    <location>
        <position position="119"/>
    </location>
    <ligand>
        <name>substrate</name>
    </ligand>
</feature>
<feature type="binding site" evidence="1">
    <location>
        <position position="153"/>
    </location>
    <ligand>
        <name>substrate</name>
    </ligand>
</feature>
<feature type="binding site" evidence="1">
    <location>
        <position position="227"/>
    </location>
    <ligand>
        <name>NAD(+)</name>
        <dbReference type="ChEBI" id="CHEBI:57540"/>
    </ligand>
</feature>
<name>MDH_ECOUT</name>
<accession>Q1R6A3</accession>
<reference key="1">
    <citation type="journal article" date="2006" name="Proc. Natl. Acad. Sci. U.S.A.">
        <title>Identification of genes subject to positive selection in uropathogenic strains of Escherichia coli: a comparative genomics approach.</title>
        <authorList>
            <person name="Chen S.L."/>
            <person name="Hung C.-S."/>
            <person name="Xu J."/>
            <person name="Reigstad C.S."/>
            <person name="Magrini V."/>
            <person name="Sabo A."/>
            <person name="Blasiar D."/>
            <person name="Bieri T."/>
            <person name="Meyer R.R."/>
            <person name="Ozersky P."/>
            <person name="Armstrong J.R."/>
            <person name="Fulton R.S."/>
            <person name="Latreille J.P."/>
            <person name="Spieth J."/>
            <person name="Hooton T.M."/>
            <person name="Mardis E.R."/>
            <person name="Hultgren S.J."/>
            <person name="Gordon J.I."/>
        </authorList>
    </citation>
    <scope>NUCLEOTIDE SEQUENCE [LARGE SCALE GENOMIC DNA]</scope>
    <source>
        <strain>UTI89 / UPEC</strain>
    </source>
</reference>
<proteinExistence type="inferred from homology"/>
<gene>
    <name evidence="1" type="primary">mdh</name>
    <name type="ordered locus">UTI89_C3667</name>
</gene>
<dbReference type="EC" id="1.1.1.37" evidence="1"/>
<dbReference type="EMBL" id="CP000243">
    <property type="protein sequence ID" value="ABE09111.1"/>
    <property type="status" value="ALT_INIT"/>
    <property type="molecule type" value="Genomic_DNA"/>
</dbReference>
<dbReference type="RefSeq" id="WP_001295272.1">
    <property type="nucleotide sequence ID" value="NZ_CP064825.1"/>
</dbReference>
<dbReference type="SMR" id="Q1R6A3"/>
<dbReference type="GeneID" id="93778749"/>
<dbReference type="KEGG" id="eci:UTI89_C3667"/>
<dbReference type="HOGENOM" id="CLU_047181_0_0_6"/>
<dbReference type="Proteomes" id="UP000001952">
    <property type="component" value="Chromosome"/>
</dbReference>
<dbReference type="GO" id="GO:0005737">
    <property type="term" value="C:cytoplasm"/>
    <property type="evidence" value="ECO:0007669"/>
    <property type="project" value="TreeGrafter"/>
</dbReference>
<dbReference type="GO" id="GO:0030060">
    <property type="term" value="F:L-malate dehydrogenase (NAD+) activity"/>
    <property type="evidence" value="ECO:0007669"/>
    <property type="project" value="UniProtKB-UniRule"/>
</dbReference>
<dbReference type="GO" id="GO:0006108">
    <property type="term" value="P:malate metabolic process"/>
    <property type="evidence" value="ECO:0007669"/>
    <property type="project" value="InterPro"/>
</dbReference>
<dbReference type="GO" id="GO:0006099">
    <property type="term" value="P:tricarboxylic acid cycle"/>
    <property type="evidence" value="ECO:0007669"/>
    <property type="project" value="UniProtKB-UniRule"/>
</dbReference>
<dbReference type="CDD" id="cd01337">
    <property type="entry name" value="MDH_glyoxysomal_mitochondrial"/>
    <property type="match status" value="1"/>
</dbReference>
<dbReference type="FunFam" id="3.40.50.720:FF:000017">
    <property type="entry name" value="Malate dehydrogenase"/>
    <property type="match status" value="1"/>
</dbReference>
<dbReference type="FunFam" id="3.90.110.10:FF:000001">
    <property type="entry name" value="Malate dehydrogenase"/>
    <property type="match status" value="1"/>
</dbReference>
<dbReference type="Gene3D" id="3.90.110.10">
    <property type="entry name" value="Lactate dehydrogenase/glycoside hydrolase, family 4, C-terminal"/>
    <property type="match status" value="1"/>
</dbReference>
<dbReference type="Gene3D" id="3.40.50.720">
    <property type="entry name" value="NAD(P)-binding Rossmann-like Domain"/>
    <property type="match status" value="1"/>
</dbReference>
<dbReference type="HAMAP" id="MF_01516">
    <property type="entry name" value="Malate_dehydrog_1"/>
    <property type="match status" value="1"/>
</dbReference>
<dbReference type="InterPro" id="IPR001557">
    <property type="entry name" value="L-lactate/malate_DH"/>
</dbReference>
<dbReference type="InterPro" id="IPR022383">
    <property type="entry name" value="Lactate/malate_DH_C"/>
</dbReference>
<dbReference type="InterPro" id="IPR001236">
    <property type="entry name" value="Lactate/malate_DH_N"/>
</dbReference>
<dbReference type="InterPro" id="IPR015955">
    <property type="entry name" value="Lactate_DH/Glyco_Ohase_4_C"/>
</dbReference>
<dbReference type="InterPro" id="IPR001252">
    <property type="entry name" value="Malate_DH_AS"/>
</dbReference>
<dbReference type="InterPro" id="IPR010097">
    <property type="entry name" value="Malate_DH_type1"/>
</dbReference>
<dbReference type="InterPro" id="IPR023958">
    <property type="entry name" value="Malate_DH_type1_bac"/>
</dbReference>
<dbReference type="InterPro" id="IPR036291">
    <property type="entry name" value="NAD(P)-bd_dom_sf"/>
</dbReference>
<dbReference type="NCBIfam" id="TIGR01772">
    <property type="entry name" value="MDH_euk_gproteo"/>
    <property type="match status" value="1"/>
</dbReference>
<dbReference type="PANTHER" id="PTHR11540">
    <property type="entry name" value="MALATE AND LACTATE DEHYDROGENASE"/>
    <property type="match status" value="1"/>
</dbReference>
<dbReference type="PANTHER" id="PTHR11540:SF16">
    <property type="entry name" value="MALATE DEHYDROGENASE, MITOCHONDRIAL"/>
    <property type="match status" value="1"/>
</dbReference>
<dbReference type="Pfam" id="PF02866">
    <property type="entry name" value="Ldh_1_C"/>
    <property type="match status" value="1"/>
</dbReference>
<dbReference type="Pfam" id="PF00056">
    <property type="entry name" value="Ldh_1_N"/>
    <property type="match status" value="1"/>
</dbReference>
<dbReference type="PIRSF" id="PIRSF000102">
    <property type="entry name" value="Lac_mal_DH"/>
    <property type="match status" value="1"/>
</dbReference>
<dbReference type="SUPFAM" id="SSF56327">
    <property type="entry name" value="LDH C-terminal domain-like"/>
    <property type="match status" value="1"/>
</dbReference>
<dbReference type="SUPFAM" id="SSF51735">
    <property type="entry name" value="NAD(P)-binding Rossmann-fold domains"/>
    <property type="match status" value="1"/>
</dbReference>
<dbReference type="PROSITE" id="PS00068">
    <property type="entry name" value="MDH"/>
    <property type="match status" value="1"/>
</dbReference>
<sequence length="312" mass="32337">MKVAVLGAAGGIGQALALLLKTQLPSGSELSLYDIAPVTPGVAVDLSHIPTAVKIKGFSGEDATPALEGADVVLISAGVARKPGMDRSDLFNVNAGIVKNLVQQVAKTCPKACIGIITNPVNTTVAIAAEVLKKAGVYDKNKLFGVTTLDIIRSNTFVAELKGKQPGEVEVPVIGGHSGVTILPLLSQVPGVSFTEQEVADLTKRIQNAGTEVVEAKAGGGSATLSMGQAAARFGLSLVRALQGEQGVVECAYVEGDGQYARFFSQPLLLGKNGVEERKSIGTLSAFEQNALEGMLDTLKKDIALGEEFVNK</sequence>
<keyword id="KW-0520">NAD</keyword>
<keyword id="KW-0560">Oxidoreductase</keyword>
<keyword id="KW-0816">Tricarboxylic acid cycle</keyword>
<protein>
    <recommendedName>
        <fullName evidence="1">Malate dehydrogenase</fullName>
        <ecNumber evidence="1">1.1.1.37</ecNumber>
    </recommendedName>
</protein>
<organism>
    <name type="scientific">Escherichia coli (strain UTI89 / UPEC)</name>
    <dbReference type="NCBI Taxonomy" id="364106"/>
    <lineage>
        <taxon>Bacteria</taxon>
        <taxon>Pseudomonadati</taxon>
        <taxon>Pseudomonadota</taxon>
        <taxon>Gammaproteobacteria</taxon>
        <taxon>Enterobacterales</taxon>
        <taxon>Enterobacteriaceae</taxon>
        <taxon>Escherichia</taxon>
    </lineage>
</organism>
<comment type="function">
    <text evidence="1">Catalyzes the reversible oxidation of malate to oxaloacetate.</text>
</comment>
<comment type="catalytic activity">
    <reaction evidence="1">
        <text>(S)-malate + NAD(+) = oxaloacetate + NADH + H(+)</text>
        <dbReference type="Rhea" id="RHEA:21432"/>
        <dbReference type="ChEBI" id="CHEBI:15378"/>
        <dbReference type="ChEBI" id="CHEBI:15589"/>
        <dbReference type="ChEBI" id="CHEBI:16452"/>
        <dbReference type="ChEBI" id="CHEBI:57540"/>
        <dbReference type="ChEBI" id="CHEBI:57945"/>
        <dbReference type="EC" id="1.1.1.37"/>
    </reaction>
</comment>
<comment type="subunit">
    <text evidence="1">Homodimer.</text>
</comment>
<comment type="similarity">
    <text evidence="1">Belongs to the LDH/MDH superfamily. MDH type 1 family.</text>
</comment>
<comment type="sequence caution" evidence="2">
    <conflict type="erroneous initiation">
        <sequence resource="EMBL-CDS" id="ABE09111"/>
    </conflict>
</comment>
<evidence type="ECO:0000255" key="1">
    <source>
        <dbReference type="HAMAP-Rule" id="MF_01516"/>
    </source>
</evidence>
<evidence type="ECO:0000305" key="2"/>